<gene>
    <name evidence="1" type="primary">pheS</name>
    <name type="ordered locus">NFA_19180</name>
</gene>
<protein>
    <recommendedName>
        <fullName evidence="1">Phenylalanine--tRNA ligase alpha subunit</fullName>
        <ecNumber evidence="1">6.1.1.20</ecNumber>
    </recommendedName>
    <alternativeName>
        <fullName evidence="1">Phenylalanyl-tRNA synthetase alpha subunit</fullName>
        <shortName evidence="1">PheRS</shortName>
    </alternativeName>
</protein>
<evidence type="ECO:0000255" key="1">
    <source>
        <dbReference type="HAMAP-Rule" id="MF_00281"/>
    </source>
</evidence>
<proteinExistence type="inferred from homology"/>
<name>SYFA_NOCFA</name>
<sequence>MDLSEEALAAAAADAEKAFAAAADLDALAVAKTEHLGGKAPLALAQRALGALPKEEKKDAGKRVNVARGRVAEAFEARRAVLLAERDAAVLVAEAIDVTLPARRQQVGARHPITVISERIADVFVAMGWEVAEGPEVETEHFNFDALNFLPDHPARTMQDTFHIAPEGSRQVLRTHTSPVQVRSMLERDLPIYVVCPGRTFRTDELDATHTPVFSQVEGLAVDKGLTMAHLRGTLDAFARALFGPETRTRMRPNYFPFTEPSAEVDVWFPDKKGGAGWVEWGGCGMVNPKVLIASGIDPEVYSGFAFGMGLERTLQFRNGIPDMRDIVEGDVRFTLPFGIQS</sequence>
<accession>Q5YYH7</accession>
<comment type="catalytic activity">
    <reaction evidence="1">
        <text>tRNA(Phe) + L-phenylalanine + ATP = L-phenylalanyl-tRNA(Phe) + AMP + diphosphate + H(+)</text>
        <dbReference type="Rhea" id="RHEA:19413"/>
        <dbReference type="Rhea" id="RHEA-COMP:9668"/>
        <dbReference type="Rhea" id="RHEA-COMP:9699"/>
        <dbReference type="ChEBI" id="CHEBI:15378"/>
        <dbReference type="ChEBI" id="CHEBI:30616"/>
        <dbReference type="ChEBI" id="CHEBI:33019"/>
        <dbReference type="ChEBI" id="CHEBI:58095"/>
        <dbReference type="ChEBI" id="CHEBI:78442"/>
        <dbReference type="ChEBI" id="CHEBI:78531"/>
        <dbReference type="ChEBI" id="CHEBI:456215"/>
        <dbReference type="EC" id="6.1.1.20"/>
    </reaction>
</comment>
<comment type="cofactor">
    <cofactor evidence="1">
        <name>Mg(2+)</name>
        <dbReference type="ChEBI" id="CHEBI:18420"/>
    </cofactor>
    <text evidence="1">Binds 2 magnesium ions per tetramer.</text>
</comment>
<comment type="subunit">
    <text evidence="1">Tetramer of two alpha and two beta subunits.</text>
</comment>
<comment type="subcellular location">
    <subcellularLocation>
        <location evidence="1">Cytoplasm</location>
    </subcellularLocation>
</comment>
<comment type="similarity">
    <text evidence="1">Belongs to the class-II aminoacyl-tRNA synthetase family. Phe-tRNA synthetase alpha subunit type 1 subfamily.</text>
</comment>
<reference key="1">
    <citation type="journal article" date="2004" name="Proc. Natl. Acad. Sci. U.S.A.">
        <title>The complete genomic sequence of Nocardia farcinica IFM 10152.</title>
        <authorList>
            <person name="Ishikawa J."/>
            <person name="Yamashita A."/>
            <person name="Mikami Y."/>
            <person name="Hoshino Y."/>
            <person name="Kurita H."/>
            <person name="Hotta K."/>
            <person name="Shiba T."/>
            <person name="Hattori M."/>
        </authorList>
    </citation>
    <scope>NUCLEOTIDE SEQUENCE [LARGE SCALE GENOMIC DNA]</scope>
    <source>
        <strain>IFM 10152</strain>
    </source>
</reference>
<feature type="chain" id="PRO_0000232002" description="Phenylalanine--tRNA ligase alpha subunit">
    <location>
        <begin position="1"/>
        <end position="342"/>
    </location>
</feature>
<feature type="binding site" evidence="1">
    <location>
        <position position="260"/>
    </location>
    <ligand>
        <name>Mg(2+)</name>
        <dbReference type="ChEBI" id="CHEBI:18420"/>
        <note>shared with beta subunit</note>
    </ligand>
</feature>
<keyword id="KW-0030">Aminoacyl-tRNA synthetase</keyword>
<keyword id="KW-0067">ATP-binding</keyword>
<keyword id="KW-0963">Cytoplasm</keyword>
<keyword id="KW-0436">Ligase</keyword>
<keyword id="KW-0460">Magnesium</keyword>
<keyword id="KW-0479">Metal-binding</keyword>
<keyword id="KW-0547">Nucleotide-binding</keyword>
<keyword id="KW-0648">Protein biosynthesis</keyword>
<keyword id="KW-1185">Reference proteome</keyword>
<organism>
    <name type="scientific">Nocardia farcinica (strain IFM 10152)</name>
    <dbReference type="NCBI Taxonomy" id="247156"/>
    <lineage>
        <taxon>Bacteria</taxon>
        <taxon>Bacillati</taxon>
        <taxon>Actinomycetota</taxon>
        <taxon>Actinomycetes</taxon>
        <taxon>Mycobacteriales</taxon>
        <taxon>Nocardiaceae</taxon>
        <taxon>Nocardia</taxon>
    </lineage>
</organism>
<dbReference type="EC" id="6.1.1.20" evidence="1"/>
<dbReference type="EMBL" id="AP006618">
    <property type="protein sequence ID" value="BAD56764.1"/>
    <property type="molecule type" value="Genomic_DNA"/>
</dbReference>
<dbReference type="SMR" id="Q5YYH7"/>
<dbReference type="STRING" id="247156.NFA_19180"/>
<dbReference type="KEGG" id="nfa:NFA_19180"/>
<dbReference type="eggNOG" id="COG0016">
    <property type="taxonomic scope" value="Bacteria"/>
</dbReference>
<dbReference type="HOGENOM" id="CLU_025086_0_0_11"/>
<dbReference type="Proteomes" id="UP000006820">
    <property type="component" value="Chromosome"/>
</dbReference>
<dbReference type="GO" id="GO:0005737">
    <property type="term" value="C:cytoplasm"/>
    <property type="evidence" value="ECO:0007669"/>
    <property type="project" value="UniProtKB-SubCell"/>
</dbReference>
<dbReference type="GO" id="GO:0005524">
    <property type="term" value="F:ATP binding"/>
    <property type="evidence" value="ECO:0007669"/>
    <property type="project" value="UniProtKB-UniRule"/>
</dbReference>
<dbReference type="GO" id="GO:0000287">
    <property type="term" value="F:magnesium ion binding"/>
    <property type="evidence" value="ECO:0007669"/>
    <property type="project" value="UniProtKB-UniRule"/>
</dbReference>
<dbReference type="GO" id="GO:0004826">
    <property type="term" value="F:phenylalanine-tRNA ligase activity"/>
    <property type="evidence" value="ECO:0007669"/>
    <property type="project" value="UniProtKB-UniRule"/>
</dbReference>
<dbReference type="GO" id="GO:0000049">
    <property type="term" value="F:tRNA binding"/>
    <property type="evidence" value="ECO:0007669"/>
    <property type="project" value="InterPro"/>
</dbReference>
<dbReference type="GO" id="GO:0006432">
    <property type="term" value="P:phenylalanyl-tRNA aminoacylation"/>
    <property type="evidence" value="ECO:0007669"/>
    <property type="project" value="UniProtKB-UniRule"/>
</dbReference>
<dbReference type="CDD" id="cd00496">
    <property type="entry name" value="PheRS_alpha_core"/>
    <property type="match status" value="1"/>
</dbReference>
<dbReference type="FunFam" id="3.30.930.10:FF:000003">
    <property type="entry name" value="Phenylalanine--tRNA ligase alpha subunit"/>
    <property type="match status" value="1"/>
</dbReference>
<dbReference type="Gene3D" id="3.30.930.10">
    <property type="entry name" value="Bira Bifunctional Protein, Domain 2"/>
    <property type="match status" value="1"/>
</dbReference>
<dbReference type="HAMAP" id="MF_00281">
    <property type="entry name" value="Phe_tRNA_synth_alpha1"/>
    <property type="match status" value="1"/>
</dbReference>
<dbReference type="InterPro" id="IPR006195">
    <property type="entry name" value="aa-tRNA-synth_II"/>
</dbReference>
<dbReference type="InterPro" id="IPR045864">
    <property type="entry name" value="aa-tRNA-synth_II/BPL/LPL"/>
</dbReference>
<dbReference type="InterPro" id="IPR004529">
    <property type="entry name" value="Phe-tRNA-synth_IIc_asu"/>
</dbReference>
<dbReference type="InterPro" id="IPR004188">
    <property type="entry name" value="Phe-tRNA_ligase_II_N"/>
</dbReference>
<dbReference type="InterPro" id="IPR022911">
    <property type="entry name" value="Phe_tRNA_ligase_alpha1_bac"/>
</dbReference>
<dbReference type="InterPro" id="IPR002319">
    <property type="entry name" value="Phenylalanyl-tRNA_Synthase"/>
</dbReference>
<dbReference type="InterPro" id="IPR010978">
    <property type="entry name" value="tRNA-bd_arm"/>
</dbReference>
<dbReference type="NCBIfam" id="TIGR00468">
    <property type="entry name" value="pheS"/>
    <property type="match status" value="1"/>
</dbReference>
<dbReference type="PANTHER" id="PTHR11538:SF41">
    <property type="entry name" value="PHENYLALANINE--TRNA LIGASE, MITOCHONDRIAL"/>
    <property type="match status" value="1"/>
</dbReference>
<dbReference type="PANTHER" id="PTHR11538">
    <property type="entry name" value="PHENYLALANYL-TRNA SYNTHETASE"/>
    <property type="match status" value="1"/>
</dbReference>
<dbReference type="Pfam" id="PF02912">
    <property type="entry name" value="Phe_tRNA-synt_N"/>
    <property type="match status" value="1"/>
</dbReference>
<dbReference type="Pfam" id="PF01409">
    <property type="entry name" value="tRNA-synt_2d"/>
    <property type="match status" value="1"/>
</dbReference>
<dbReference type="SUPFAM" id="SSF55681">
    <property type="entry name" value="Class II aaRS and biotin synthetases"/>
    <property type="match status" value="1"/>
</dbReference>
<dbReference type="SUPFAM" id="SSF46589">
    <property type="entry name" value="tRNA-binding arm"/>
    <property type="match status" value="1"/>
</dbReference>
<dbReference type="PROSITE" id="PS50862">
    <property type="entry name" value="AA_TRNA_LIGASE_II"/>
    <property type="match status" value="1"/>
</dbReference>